<feature type="chain" id="PRO_1000001976" description="Glutamate--tRNA ligase">
    <location>
        <begin position="1"/>
        <end position="484"/>
    </location>
</feature>
<feature type="short sequence motif" description="'HIGH' region" evidence="1">
    <location>
        <begin position="11"/>
        <end position="21"/>
    </location>
</feature>
<feature type="short sequence motif" description="'KMSKS' region" evidence="1">
    <location>
        <begin position="255"/>
        <end position="259"/>
    </location>
</feature>
<feature type="binding site" evidence="1">
    <location>
        <position position="258"/>
    </location>
    <ligand>
        <name>ATP</name>
        <dbReference type="ChEBI" id="CHEBI:30616"/>
    </ligand>
</feature>
<accession>Q03IP7</accession>
<reference key="1">
    <citation type="journal article" date="2006" name="Proc. Natl. Acad. Sci. U.S.A.">
        <title>Comparative genomics of the lactic acid bacteria.</title>
        <authorList>
            <person name="Makarova K.S."/>
            <person name="Slesarev A."/>
            <person name="Wolf Y.I."/>
            <person name="Sorokin A."/>
            <person name="Mirkin B."/>
            <person name="Koonin E.V."/>
            <person name="Pavlov A."/>
            <person name="Pavlova N."/>
            <person name="Karamychev V."/>
            <person name="Polouchine N."/>
            <person name="Shakhova V."/>
            <person name="Grigoriev I."/>
            <person name="Lou Y."/>
            <person name="Rohksar D."/>
            <person name="Lucas S."/>
            <person name="Huang K."/>
            <person name="Goodstein D.M."/>
            <person name="Hawkins T."/>
            <person name="Plengvidhya V."/>
            <person name="Welker D."/>
            <person name="Hughes J."/>
            <person name="Goh Y."/>
            <person name="Benson A."/>
            <person name="Baldwin K."/>
            <person name="Lee J.-H."/>
            <person name="Diaz-Muniz I."/>
            <person name="Dosti B."/>
            <person name="Smeianov V."/>
            <person name="Wechter W."/>
            <person name="Barabote R."/>
            <person name="Lorca G."/>
            <person name="Altermann E."/>
            <person name="Barrangou R."/>
            <person name="Ganesan B."/>
            <person name="Xie Y."/>
            <person name="Rawsthorne H."/>
            <person name="Tamir D."/>
            <person name="Parker C."/>
            <person name="Breidt F."/>
            <person name="Broadbent J.R."/>
            <person name="Hutkins R."/>
            <person name="O'Sullivan D."/>
            <person name="Steele J."/>
            <person name="Unlu G."/>
            <person name="Saier M.H. Jr."/>
            <person name="Klaenhammer T."/>
            <person name="Richardson P."/>
            <person name="Kozyavkin S."/>
            <person name="Weimer B.C."/>
            <person name="Mills D.A."/>
        </authorList>
    </citation>
    <scope>NUCLEOTIDE SEQUENCE [LARGE SCALE GENOMIC DNA]</scope>
    <source>
        <strain>ATCC BAA-491 / LMD-9</strain>
    </source>
</reference>
<name>SYE_STRTD</name>
<organism>
    <name type="scientific">Streptococcus thermophilus (strain ATCC BAA-491 / LMD-9)</name>
    <dbReference type="NCBI Taxonomy" id="322159"/>
    <lineage>
        <taxon>Bacteria</taxon>
        <taxon>Bacillati</taxon>
        <taxon>Bacillota</taxon>
        <taxon>Bacilli</taxon>
        <taxon>Lactobacillales</taxon>
        <taxon>Streptococcaceae</taxon>
        <taxon>Streptococcus</taxon>
    </lineage>
</organism>
<keyword id="KW-0030">Aminoacyl-tRNA synthetase</keyword>
<keyword id="KW-0067">ATP-binding</keyword>
<keyword id="KW-0963">Cytoplasm</keyword>
<keyword id="KW-0436">Ligase</keyword>
<keyword id="KW-0547">Nucleotide-binding</keyword>
<keyword id="KW-0648">Protein biosynthesis</keyword>
<evidence type="ECO:0000255" key="1">
    <source>
        <dbReference type="HAMAP-Rule" id="MF_00022"/>
    </source>
</evidence>
<protein>
    <recommendedName>
        <fullName evidence="1">Glutamate--tRNA ligase</fullName>
        <ecNumber evidence="1">6.1.1.17</ecNumber>
    </recommendedName>
    <alternativeName>
        <fullName evidence="1">Glutamyl-tRNA synthetase</fullName>
        <shortName evidence="1">GluRS</shortName>
    </alternativeName>
</protein>
<proteinExistence type="inferred from homology"/>
<dbReference type="EC" id="6.1.1.17" evidence="1"/>
<dbReference type="EMBL" id="CP000419">
    <property type="protein sequence ID" value="ABJ66925.1"/>
    <property type="molecule type" value="Genomic_DNA"/>
</dbReference>
<dbReference type="RefSeq" id="WP_002953532.1">
    <property type="nucleotide sequence ID" value="NC_008532.1"/>
</dbReference>
<dbReference type="SMR" id="Q03IP7"/>
<dbReference type="GeneID" id="66899551"/>
<dbReference type="KEGG" id="ste:STER_1793"/>
<dbReference type="HOGENOM" id="CLU_015768_6_1_9"/>
<dbReference type="GO" id="GO:0005829">
    <property type="term" value="C:cytosol"/>
    <property type="evidence" value="ECO:0007669"/>
    <property type="project" value="TreeGrafter"/>
</dbReference>
<dbReference type="GO" id="GO:0005524">
    <property type="term" value="F:ATP binding"/>
    <property type="evidence" value="ECO:0007669"/>
    <property type="project" value="UniProtKB-UniRule"/>
</dbReference>
<dbReference type="GO" id="GO:0004818">
    <property type="term" value="F:glutamate-tRNA ligase activity"/>
    <property type="evidence" value="ECO:0007669"/>
    <property type="project" value="UniProtKB-UniRule"/>
</dbReference>
<dbReference type="GO" id="GO:0000049">
    <property type="term" value="F:tRNA binding"/>
    <property type="evidence" value="ECO:0007669"/>
    <property type="project" value="InterPro"/>
</dbReference>
<dbReference type="GO" id="GO:0008270">
    <property type="term" value="F:zinc ion binding"/>
    <property type="evidence" value="ECO:0007669"/>
    <property type="project" value="InterPro"/>
</dbReference>
<dbReference type="GO" id="GO:0006424">
    <property type="term" value="P:glutamyl-tRNA aminoacylation"/>
    <property type="evidence" value="ECO:0007669"/>
    <property type="project" value="UniProtKB-UniRule"/>
</dbReference>
<dbReference type="CDD" id="cd00808">
    <property type="entry name" value="GluRS_core"/>
    <property type="match status" value="1"/>
</dbReference>
<dbReference type="FunFam" id="1.10.10.350:FF:000002">
    <property type="entry name" value="Glutamate--tRNA ligase"/>
    <property type="match status" value="1"/>
</dbReference>
<dbReference type="FunFam" id="3.40.50.620:FF:000007">
    <property type="entry name" value="Glutamate--tRNA ligase"/>
    <property type="match status" value="1"/>
</dbReference>
<dbReference type="Gene3D" id="1.10.10.350">
    <property type="match status" value="1"/>
</dbReference>
<dbReference type="Gene3D" id="3.40.50.620">
    <property type="entry name" value="HUPs"/>
    <property type="match status" value="1"/>
</dbReference>
<dbReference type="HAMAP" id="MF_00022">
    <property type="entry name" value="Glu_tRNA_synth_type1"/>
    <property type="match status" value="1"/>
</dbReference>
<dbReference type="InterPro" id="IPR045462">
    <property type="entry name" value="aa-tRNA-synth_I_cd-bd"/>
</dbReference>
<dbReference type="InterPro" id="IPR020751">
    <property type="entry name" value="aa-tRNA-synth_I_codon-bd_sub2"/>
</dbReference>
<dbReference type="InterPro" id="IPR001412">
    <property type="entry name" value="aa-tRNA-synth_I_CS"/>
</dbReference>
<dbReference type="InterPro" id="IPR008925">
    <property type="entry name" value="aa_tRNA-synth_I_cd-bd_sf"/>
</dbReference>
<dbReference type="InterPro" id="IPR004527">
    <property type="entry name" value="Glu-tRNA-ligase_bac/mito"/>
</dbReference>
<dbReference type="InterPro" id="IPR000924">
    <property type="entry name" value="Glu/Gln-tRNA-synth"/>
</dbReference>
<dbReference type="InterPro" id="IPR020058">
    <property type="entry name" value="Glu/Gln-tRNA-synth_Ib_cat-dom"/>
</dbReference>
<dbReference type="InterPro" id="IPR049940">
    <property type="entry name" value="GluQ/Sye"/>
</dbReference>
<dbReference type="InterPro" id="IPR033910">
    <property type="entry name" value="GluRS_core"/>
</dbReference>
<dbReference type="InterPro" id="IPR014729">
    <property type="entry name" value="Rossmann-like_a/b/a_fold"/>
</dbReference>
<dbReference type="NCBIfam" id="TIGR00464">
    <property type="entry name" value="gltX_bact"/>
    <property type="match status" value="1"/>
</dbReference>
<dbReference type="PANTHER" id="PTHR43311">
    <property type="entry name" value="GLUTAMATE--TRNA LIGASE"/>
    <property type="match status" value="1"/>
</dbReference>
<dbReference type="PANTHER" id="PTHR43311:SF2">
    <property type="entry name" value="GLUTAMATE--TRNA LIGASE, MITOCHONDRIAL-RELATED"/>
    <property type="match status" value="1"/>
</dbReference>
<dbReference type="Pfam" id="PF19269">
    <property type="entry name" value="Anticodon_2"/>
    <property type="match status" value="1"/>
</dbReference>
<dbReference type="Pfam" id="PF00749">
    <property type="entry name" value="tRNA-synt_1c"/>
    <property type="match status" value="1"/>
</dbReference>
<dbReference type="PRINTS" id="PR00987">
    <property type="entry name" value="TRNASYNTHGLU"/>
</dbReference>
<dbReference type="SUPFAM" id="SSF48163">
    <property type="entry name" value="An anticodon-binding domain of class I aminoacyl-tRNA synthetases"/>
    <property type="match status" value="1"/>
</dbReference>
<dbReference type="SUPFAM" id="SSF52374">
    <property type="entry name" value="Nucleotidylyl transferase"/>
    <property type="match status" value="1"/>
</dbReference>
<dbReference type="PROSITE" id="PS00178">
    <property type="entry name" value="AA_TRNA_LIGASE_I"/>
    <property type="match status" value="1"/>
</dbReference>
<sequence>MAKDIRVRYAPSPTGLLHIGNARTALFNYLYARHHGGTFIIRIEDTDRKRHVEDGERSQLDNLRWLGIDWDESPETHENYRQSERLPLYQKYIDQLLAEGKAYKSYVTEEELAAERERQEAAGETPRYINEFLGMTEEEKAAYIAEREAAGIIPTVRLAVNESGIYKWHDIVKGDIEFEGGNIGGDWVIQKRDGYPTYNFAVVVDDHDMQISHVIRGDDHIANTPKQLMVYEALGWEAPEFGHMTLITNSETGKKLSKRDTNTLQFIEDYRKKGYLPEAVFNFIALLGWNPGGEDEIFSREELIKLFDENRLSKSPAAFDQKKLDWMSNDYIKHADFDKVFALCKPFLEEAGRLTDKAEKLVELYKPQMTAAEEIVPLTDLFFEDFPELTAAEKEVMAGETVPTVLEAFKAKLEAMSDDEFVTENIFSQIKAVQKETGIKGKNLFMPIRIAVSGEMHGPELPETIFLLGREKSIKHIDQVLATL</sequence>
<comment type="function">
    <text evidence="1">Catalyzes the attachment of glutamate to tRNA(Glu) in a two-step reaction: glutamate is first activated by ATP to form Glu-AMP and then transferred to the acceptor end of tRNA(Glu).</text>
</comment>
<comment type="catalytic activity">
    <reaction evidence="1">
        <text>tRNA(Glu) + L-glutamate + ATP = L-glutamyl-tRNA(Glu) + AMP + diphosphate</text>
        <dbReference type="Rhea" id="RHEA:23540"/>
        <dbReference type="Rhea" id="RHEA-COMP:9663"/>
        <dbReference type="Rhea" id="RHEA-COMP:9680"/>
        <dbReference type="ChEBI" id="CHEBI:29985"/>
        <dbReference type="ChEBI" id="CHEBI:30616"/>
        <dbReference type="ChEBI" id="CHEBI:33019"/>
        <dbReference type="ChEBI" id="CHEBI:78442"/>
        <dbReference type="ChEBI" id="CHEBI:78520"/>
        <dbReference type="ChEBI" id="CHEBI:456215"/>
        <dbReference type="EC" id="6.1.1.17"/>
    </reaction>
</comment>
<comment type="subunit">
    <text evidence="1">Monomer.</text>
</comment>
<comment type="subcellular location">
    <subcellularLocation>
        <location evidence="1">Cytoplasm</location>
    </subcellularLocation>
</comment>
<comment type="similarity">
    <text evidence="1">Belongs to the class-I aminoacyl-tRNA synthetase family. Glutamate--tRNA ligase type 1 subfamily.</text>
</comment>
<gene>
    <name evidence="1" type="primary">gltX</name>
    <name type="ordered locus">STER_1793</name>
</gene>